<evidence type="ECO:0000255" key="1">
    <source>
        <dbReference type="HAMAP-Rule" id="MF_00012"/>
    </source>
</evidence>
<evidence type="ECO:0000256" key="2">
    <source>
        <dbReference type="SAM" id="MobiDB-lite"/>
    </source>
</evidence>
<name>ILVD_DEIGD</name>
<protein>
    <recommendedName>
        <fullName evidence="1">Dihydroxy-acid dehydratase</fullName>
        <shortName evidence="1">DAD</shortName>
        <ecNumber evidence="1">4.2.1.9</ecNumber>
    </recommendedName>
</protein>
<reference key="1">
    <citation type="submission" date="2006-04" db="EMBL/GenBank/DDBJ databases">
        <title>Complete sequence of chromosome of Deinococcus geothermalis DSM 11300.</title>
        <authorList>
            <person name="Copeland A."/>
            <person name="Lucas S."/>
            <person name="Lapidus A."/>
            <person name="Barry K."/>
            <person name="Detter J.C."/>
            <person name="Glavina del Rio T."/>
            <person name="Hammon N."/>
            <person name="Israni S."/>
            <person name="Dalin E."/>
            <person name="Tice H."/>
            <person name="Pitluck S."/>
            <person name="Brettin T."/>
            <person name="Bruce D."/>
            <person name="Han C."/>
            <person name="Tapia R."/>
            <person name="Saunders E."/>
            <person name="Gilna P."/>
            <person name="Schmutz J."/>
            <person name="Larimer F."/>
            <person name="Land M."/>
            <person name="Hauser L."/>
            <person name="Kyrpides N."/>
            <person name="Kim E."/>
            <person name="Daly M.J."/>
            <person name="Fredrickson J.K."/>
            <person name="Makarova K.S."/>
            <person name="Gaidamakova E.K."/>
            <person name="Zhai M."/>
            <person name="Richardson P."/>
        </authorList>
    </citation>
    <scope>NUCLEOTIDE SEQUENCE [LARGE SCALE GENOMIC DNA]</scope>
    <source>
        <strain>DSM 11300 / CIP 105573 / AG-3a</strain>
    </source>
</reference>
<dbReference type="EC" id="4.2.1.9" evidence="1"/>
<dbReference type="EMBL" id="CP000359">
    <property type="protein sequence ID" value="ABF45536.1"/>
    <property type="molecule type" value="Genomic_DNA"/>
</dbReference>
<dbReference type="RefSeq" id="WP_011530373.1">
    <property type="nucleotide sequence ID" value="NC_008025.1"/>
</dbReference>
<dbReference type="SMR" id="Q1IYZ8"/>
<dbReference type="STRING" id="319795.Dgeo_1240"/>
<dbReference type="KEGG" id="dge:Dgeo_1240"/>
<dbReference type="eggNOG" id="COG0129">
    <property type="taxonomic scope" value="Bacteria"/>
</dbReference>
<dbReference type="HOGENOM" id="CLU_014271_4_1_0"/>
<dbReference type="UniPathway" id="UPA00047">
    <property type="reaction ID" value="UER00057"/>
</dbReference>
<dbReference type="UniPathway" id="UPA00049">
    <property type="reaction ID" value="UER00061"/>
</dbReference>
<dbReference type="Proteomes" id="UP000002431">
    <property type="component" value="Chromosome"/>
</dbReference>
<dbReference type="GO" id="GO:0051537">
    <property type="term" value="F:2 iron, 2 sulfur cluster binding"/>
    <property type="evidence" value="ECO:0007669"/>
    <property type="project" value="UniProtKB-UniRule"/>
</dbReference>
<dbReference type="GO" id="GO:0004160">
    <property type="term" value="F:dihydroxy-acid dehydratase activity"/>
    <property type="evidence" value="ECO:0007669"/>
    <property type="project" value="UniProtKB-UniRule"/>
</dbReference>
<dbReference type="GO" id="GO:0000287">
    <property type="term" value="F:magnesium ion binding"/>
    <property type="evidence" value="ECO:0007669"/>
    <property type="project" value="UniProtKB-UniRule"/>
</dbReference>
<dbReference type="GO" id="GO:0009097">
    <property type="term" value="P:isoleucine biosynthetic process"/>
    <property type="evidence" value="ECO:0007669"/>
    <property type="project" value="UniProtKB-UniRule"/>
</dbReference>
<dbReference type="GO" id="GO:0009099">
    <property type="term" value="P:L-valine biosynthetic process"/>
    <property type="evidence" value="ECO:0007669"/>
    <property type="project" value="UniProtKB-UniRule"/>
</dbReference>
<dbReference type="FunFam" id="3.50.30.80:FF:000001">
    <property type="entry name" value="Dihydroxy-acid dehydratase"/>
    <property type="match status" value="1"/>
</dbReference>
<dbReference type="Gene3D" id="3.50.30.80">
    <property type="entry name" value="IlvD/EDD C-terminal domain-like"/>
    <property type="match status" value="1"/>
</dbReference>
<dbReference type="HAMAP" id="MF_00012">
    <property type="entry name" value="IlvD"/>
    <property type="match status" value="1"/>
</dbReference>
<dbReference type="InterPro" id="IPR050165">
    <property type="entry name" value="DHAD_IlvD/Edd"/>
</dbReference>
<dbReference type="InterPro" id="IPR042096">
    <property type="entry name" value="Dihydro-acid_dehy_C"/>
</dbReference>
<dbReference type="InterPro" id="IPR004404">
    <property type="entry name" value="DihydroxyA_deHydtase"/>
</dbReference>
<dbReference type="InterPro" id="IPR020558">
    <property type="entry name" value="DiOHA_6PGluconate_deHydtase_CS"/>
</dbReference>
<dbReference type="InterPro" id="IPR056740">
    <property type="entry name" value="ILV_EDD_C"/>
</dbReference>
<dbReference type="InterPro" id="IPR000581">
    <property type="entry name" value="ILV_EDD_N"/>
</dbReference>
<dbReference type="InterPro" id="IPR037237">
    <property type="entry name" value="IlvD/EDD_N"/>
</dbReference>
<dbReference type="NCBIfam" id="TIGR00110">
    <property type="entry name" value="ilvD"/>
    <property type="match status" value="1"/>
</dbReference>
<dbReference type="NCBIfam" id="NF002068">
    <property type="entry name" value="PRK00911.1"/>
    <property type="match status" value="1"/>
</dbReference>
<dbReference type="PANTHER" id="PTHR21000">
    <property type="entry name" value="DIHYDROXY-ACID DEHYDRATASE DAD"/>
    <property type="match status" value="1"/>
</dbReference>
<dbReference type="PANTHER" id="PTHR21000:SF5">
    <property type="entry name" value="DIHYDROXY-ACID DEHYDRATASE, MITOCHONDRIAL"/>
    <property type="match status" value="1"/>
</dbReference>
<dbReference type="Pfam" id="PF24877">
    <property type="entry name" value="ILV_EDD_C"/>
    <property type="match status" value="1"/>
</dbReference>
<dbReference type="Pfam" id="PF00920">
    <property type="entry name" value="ILVD_EDD_N"/>
    <property type="match status" value="1"/>
</dbReference>
<dbReference type="SUPFAM" id="SSF143975">
    <property type="entry name" value="IlvD/EDD N-terminal domain-like"/>
    <property type="match status" value="1"/>
</dbReference>
<dbReference type="SUPFAM" id="SSF52016">
    <property type="entry name" value="LeuD/IlvD-like"/>
    <property type="match status" value="1"/>
</dbReference>
<dbReference type="PROSITE" id="PS00886">
    <property type="entry name" value="ILVD_EDD_1"/>
    <property type="match status" value="1"/>
</dbReference>
<dbReference type="PROSITE" id="PS00887">
    <property type="entry name" value="ILVD_EDD_2"/>
    <property type="match status" value="1"/>
</dbReference>
<sequence>MTDTRTKRRMNWNSHHITQGDERAPNRAMLRAVGFEDGDFDKAIIGVAHAQSNITPCNNGLGELADHITGALREGGAMPQVYGTITVSDGISMGTEGMKCSLVSREVIADSIETVSRGQSHDGLIVVGGCDKNMPGAMIGIARLNIPAIFVYGGTIKPGHYQGKDLTIVSVFEAVGAYGAGKMSREDFEQIEKRACPGNGSCGGMYTANTMSSAFEAMGMSLPYSSTMSAVDAEKAVSAADSARALIRLIEQDIRPLDILTKKAFENAITVVMAVGGSTNAVLHLMAIAHACGVDLTLEDFERIRERTPVFCDLKPSGKYVATDLHEVGGIPRVMKMLLKAGLLHGDCLTVTGQTVAENLADVPDQPDPGQDVILPFDQPLYSQGHLAILRGNLAPEGSVAKISGLRQIKITGPARVFDSEEECMAAIMGDQIKAGDVIVIRYEGPKGGPGMREMLSPTSAIIGKGLGDSVGLITDGRFSGGTYGLVVGHVAPEAYVGGPIALVQEGDIIELNAETCELTLHVDDAELERRRAAWVAPEPRYRRGVLAKYARLVGSAARGAVTD</sequence>
<gene>
    <name evidence="1" type="primary">ilvD</name>
    <name type="ordered locus">Dgeo_1240</name>
</gene>
<accession>Q1IYZ8</accession>
<feature type="chain" id="PRO_0000321596" description="Dihydroxy-acid dehydratase">
    <location>
        <begin position="1"/>
        <end position="564"/>
    </location>
</feature>
<feature type="region of interest" description="Disordered" evidence="2">
    <location>
        <begin position="1"/>
        <end position="23"/>
    </location>
</feature>
<feature type="compositionally biased region" description="Basic residues" evidence="2">
    <location>
        <begin position="1"/>
        <end position="10"/>
    </location>
</feature>
<feature type="active site" description="Proton acceptor" evidence="1">
    <location>
        <position position="480"/>
    </location>
</feature>
<feature type="binding site" evidence="1">
    <location>
        <position position="57"/>
    </location>
    <ligand>
        <name>[2Fe-2S] cluster</name>
        <dbReference type="ChEBI" id="CHEBI:190135"/>
    </ligand>
</feature>
<feature type="binding site" evidence="1">
    <location>
        <position position="89"/>
    </location>
    <ligand>
        <name>Mg(2+)</name>
        <dbReference type="ChEBI" id="CHEBI:18420"/>
    </ligand>
</feature>
<feature type="binding site" evidence="1">
    <location>
        <position position="130"/>
    </location>
    <ligand>
        <name>[2Fe-2S] cluster</name>
        <dbReference type="ChEBI" id="CHEBI:190135"/>
    </ligand>
</feature>
<feature type="binding site" evidence="1">
    <location>
        <position position="131"/>
    </location>
    <ligand>
        <name>Mg(2+)</name>
        <dbReference type="ChEBI" id="CHEBI:18420"/>
    </ligand>
</feature>
<feature type="binding site" description="via carbamate group" evidence="1">
    <location>
        <position position="132"/>
    </location>
    <ligand>
        <name>Mg(2+)</name>
        <dbReference type="ChEBI" id="CHEBI:18420"/>
    </ligand>
</feature>
<feature type="binding site" evidence="1">
    <location>
        <position position="202"/>
    </location>
    <ligand>
        <name>[2Fe-2S] cluster</name>
        <dbReference type="ChEBI" id="CHEBI:190135"/>
    </ligand>
</feature>
<feature type="binding site" evidence="1">
    <location>
        <position position="454"/>
    </location>
    <ligand>
        <name>Mg(2+)</name>
        <dbReference type="ChEBI" id="CHEBI:18420"/>
    </ligand>
</feature>
<feature type="modified residue" description="N6-carboxylysine" evidence="1">
    <location>
        <position position="132"/>
    </location>
</feature>
<organism>
    <name type="scientific">Deinococcus geothermalis (strain DSM 11300 / CIP 105573 / AG-3a)</name>
    <dbReference type="NCBI Taxonomy" id="319795"/>
    <lineage>
        <taxon>Bacteria</taxon>
        <taxon>Thermotogati</taxon>
        <taxon>Deinococcota</taxon>
        <taxon>Deinococci</taxon>
        <taxon>Deinococcales</taxon>
        <taxon>Deinococcaceae</taxon>
        <taxon>Deinococcus</taxon>
    </lineage>
</organism>
<proteinExistence type="inferred from homology"/>
<comment type="function">
    <text evidence="1">Functions in the biosynthesis of branched-chain amino acids. Catalyzes the dehydration of (2R,3R)-2,3-dihydroxy-3-methylpentanoate (2,3-dihydroxy-3-methylvalerate) into 2-oxo-3-methylpentanoate (2-oxo-3-methylvalerate) and of (2R)-2,3-dihydroxy-3-methylbutanoate (2,3-dihydroxyisovalerate) into 2-oxo-3-methylbutanoate (2-oxoisovalerate), the penultimate precursor to L-isoleucine and L-valine, respectively.</text>
</comment>
<comment type="catalytic activity">
    <reaction evidence="1">
        <text>(2R)-2,3-dihydroxy-3-methylbutanoate = 3-methyl-2-oxobutanoate + H2O</text>
        <dbReference type="Rhea" id="RHEA:24809"/>
        <dbReference type="ChEBI" id="CHEBI:11851"/>
        <dbReference type="ChEBI" id="CHEBI:15377"/>
        <dbReference type="ChEBI" id="CHEBI:49072"/>
        <dbReference type="EC" id="4.2.1.9"/>
    </reaction>
    <physiologicalReaction direction="left-to-right" evidence="1">
        <dbReference type="Rhea" id="RHEA:24810"/>
    </physiologicalReaction>
</comment>
<comment type="catalytic activity">
    <reaction evidence="1">
        <text>(2R,3R)-2,3-dihydroxy-3-methylpentanoate = (S)-3-methyl-2-oxopentanoate + H2O</text>
        <dbReference type="Rhea" id="RHEA:27694"/>
        <dbReference type="ChEBI" id="CHEBI:15377"/>
        <dbReference type="ChEBI" id="CHEBI:35146"/>
        <dbReference type="ChEBI" id="CHEBI:49258"/>
        <dbReference type="EC" id="4.2.1.9"/>
    </reaction>
    <physiologicalReaction direction="left-to-right" evidence="1">
        <dbReference type="Rhea" id="RHEA:27695"/>
    </physiologicalReaction>
</comment>
<comment type="cofactor">
    <cofactor evidence="1">
        <name>[2Fe-2S] cluster</name>
        <dbReference type="ChEBI" id="CHEBI:190135"/>
    </cofactor>
    <text evidence="1">Binds 1 [2Fe-2S] cluster per subunit. This cluster acts as a Lewis acid cofactor.</text>
</comment>
<comment type="cofactor">
    <cofactor evidence="1">
        <name>Mg(2+)</name>
        <dbReference type="ChEBI" id="CHEBI:18420"/>
    </cofactor>
</comment>
<comment type="pathway">
    <text evidence="1">Amino-acid biosynthesis; L-isoleucine biosynthesis; L-isoleucine from 2-oxobutanoate: step 3/4.</text>
</comment>
<comment type="pathway">
    <text evidence="1">Amino-acid biosynthesis; L-valine biosynthesis; L-valine from pyruvate: step 3/4.</text>
</comment>
<comment type="subunit">
    <text evidence="1">Homodimer.</text>
</comment>
<comment type="similarity">
    <text evidence="1">Belongs to the IlvD/Edd family.</text>
</comment>
<keyword id="KW-0001">2Fe-2S</keyword>
<keyword id="KW-0028">Amino-acid biosynthesis</keyword>
<keyword id="KW-0100">Branched-chain amino acid biosynthesis</keyword>
<keyword id="KW-0408">Iron</keyword>
<keyword id="KW-0411">Iron-sulfur</keyword>
<keyword id="KW-0456">Lyase</keyword>
<keyword id="KW-0460">Magnesium</keyword>
<keyword id="KW-0479">Metal-binding</keyword>